<comment type="subunit">
    <text evidence="1">Homodimer and heterodimers.</text>
</comment>
<comment type="subcellular location">
    <subcellularLocation>
        <location evidence="1">Cell membrane</location>
        <topology evidence="1">Multi-pass membrane protein</topology>
    </subcellularLocation>
</comment>
<comment type="similarity">
    <text evidence="3">Belongs to the Casparian strip membrane proteins (CASP) family.</text>
</comment>
<organism>
    <name type="scientific">Picea sitchensis</name>
    <name type="common">Sitka spruce</name>
    <name type="synonym">Pinus sitchensis</name>
    <dbReference type="NCBI Taxonomy" id="3332"/>
    <lineage>
        <taxon>Eukaryota</taxon>
        <taxon>Viridiplantae</taxon>
        <taxon>Streptophyta</taxon>
        <taxon>Embryophyta</taxon>
        <taxon>Tracheophyta</taxon>
        <taxon>Spermatophyta</taxon>
        <taxon>Pinopsida</taxon>
        <taxon>Pinidae</taxon>
        <taxon>Conifers I</taxon>
        <taxon>Pinales</taxon>
        <taxon>Pinaceae</taxon>
        <taxon>Picea</taxon>
    </lineage>
</organism>
<feature type="chain" id="PRO_0000391521" description="CASP-like protein 2BC2">
    <location>
        <begin position="1"/>
        <end position="238"/>
    </location>
</feature>
<feature type="topological domain" description="Cytoplasmic" evidence="2">
    <location>
        <begin position="1"/>
        <end position="66"/>
    </location>
</feature>
<feature type="transmembrane region" description="Helical" evidence="2">
    <location>
        <begin position="67"/>
        <end position="87"/>
    </location>
</feature>
<feature type="topological domain" description="Extracellular" evidence="2">
    <location>
        <begin position="88"/>
        <end position="111"/>
    </location>
</feature>
<feature type="transmembrane region" description="Helical" evidence="2">
    <location>
        <begin position="112"/>
        <end position="132"/>
    </location>
</feature>
<feature type="topological domain" description="Cytoplasmic" evidence="2">
    <location>
        <begin position="133"/>
        <end position="148"/>
    </location>
</feature>
<feature type="transmembrane region" description="Helical" evidence="2">
    <location>
        <begin position="149"/>
        <end position="169"/>
    </location>
</feature>
<feature type="topological domain" description="Extracellular" evidence="2">
    <location>
        <begin position="170"/>
        <end position="200"/>
    </location>
</feature>
<feature type="transmembrane region" description="Helical" evidence="2">
    <location>
        <begin position="201"/>
        <end position="221"/>
    </location>
</feature>
<feature type="topological domain" description="Cytoplasmic" evidence="2">
    <location>
        <begin position="222"/>
        <end position="238"/>
    </location>
</feature>
<reference key="1">
    <citation type="submission" date="2007-06" db="EMBL/GenBank/DDBJ databases">
        <title>Full length cDNA sequences from Sitka Spruce (Picea sitchensis).</title>
        <authorList>
            <person name="Ralph S.G."/>
            <person name="Chun H.E."/>
            <person name="Liao N."/>
            <person name="Ali J."/>
            <person name="Reid K."/>
            <person name="Kolosova N."/>
            <person name="Cooper N."/>
            <person name="Cullis C."/>
            <person name="Jancsik S."/>
            <person name="Moore R."/>
            <person name="Mayo M."/>
            <person name="Wagner S."/>
            <person name="Holt R.A."/>
            <person name="Jones S.J.M."/>
            <person name="Marra M.A."/>
            <person name="Ritland C.E."/>
            <person name="Ritland K."/>
            <person name="Bohlmann J."/>
        </authorList>
    </citation>
    <scope>NUCLEOTIDE SEQUENCE [LARGE SCALE MRNA]</scope>
    <source>
        <strain>cv. FB3-425</strain>
        <tissue>Bark</tissue>
    </source>
</reference>
<reference key="2">
    <citation type="journal article" date="2014" name="Plant Physiol.">
        <title>Functional and evolutionary analysis of the CASPARIAN STRIP MEMBRANE DOMAIN PROTEIN family.</title>
        <authorList>
            <person name="Roppolo D."/>
            <person name="Boeckmann B."/>
            <person name="Pfister A."/>
            <person name="Boutet E."/>
            <person name="Rubio M.C."/>
            <person name="Denervaud-Tendon V."/>
            <person name="Vermeer J.E."/>
            <person name="Gheyselinck J."/>
            <person name="Xenarios I."/>
            <person name="Geldner N."/>
        </authorList>
    </citation>
    <scope>GENE FAMILY</scope>
    <scope>NOMENCLATURE</scope>
</reference>
<keyword id="KW-1003">Cell membrane</keyword>
<keyword id="KW-0472">Membrane</keyword>
<keyword id="KW-0812">Transmembrane</keyword>
<keyword id="KW-1133">Transmembrane helix</keyword>
<protein>
    <recommendedName>
        <fullName>CASP-like protein 2BC2</fullName>
        <shortName>PsCASPL2BC2</shortName>
    </recommendedName>
</protein>
<dbReference type="EMBL" id="EF678110">
    <property type="protein sequence ID" value="ABR17889.1"/>
    <property type="molecule type" value="mRNA"/>
</dbReference>
<dbReference type="OMA" id="KVRMAGK"/>
<dbReference type="GO" id="GO:0005886">
    <property type="term" value="C:plasma membrane"/>
    <property type="evidence" value="ECO:0007669"/>
    <property type="project" value="UniProtKB-SubCell"/>
</dbReference>
<dbReference type="InterPro" id="IPR006459">
    <property type="entry name" value="CASP/CASPL"/>
</dbReference>
<dbReference type="InterPro" id="IPR006702">
    <property type="entry name" value="CASP_dom"/>
</dbReference>
<dbReference type="NCBIfam" id="TIGR01569">
    <property type="entry name" value="A_tha_TIGR01569"/>
    <property type="match status" value="1"/>
</dbReference>
<dbReference type="PANTHER" id="PTHR33573:SF64">
    <property type="entry name" value="CASP-LIKE PROTEIN 2B1"/>
    <property type="match status" value="1"/>
</dbReference>
<dbReference type="PANTHER" id="PTHR33573">
    <property type="entry name" value="CASP-LIKE PROTEIN 4A4"/>
    <property type="match status" value="1"/>
</dbReference>
<dbReference type="Pfam" id="PF04535">
    <property type="entry name" value="CASP_dom"/>
    <property type="match status" value="1"/>
</dbReference>
<proteinExistence type="evidence at transcript level"/>
<name>CSPL9_PICSI</name>
<sequence>MPSSTYPRRRFDEVFLVEISSRILVTQEKHQQEEEEKKVRMAGKANVSVLMSEDASFHQKVAVEKRLKIGEVILRFAMIALALVAAVRVGTDTQTRTIFTIEKKAKYSDMKALVFLVVMNGIVASYSLLQGLRCVLSIYTQSPLTSKPLAWLIFALDQTMAYFSLAAAAAAAESAYLAERGQTEFQWMKVCIFYEKFCHQIGEGLVSTFLVSLSMATVSGMSAYHLFRLYGSKGKSIQ</sequence>
<evidence type="ECO:0000250" key="1"/>
<evidence type="ECO:0000255" key="2"/>
<evidence type="ECO:0000305" key="3"/>
<accession>B8LQF9</accession>